<accession>A9KJ36</accession>
<sequence length="462" mass="53772">MEKTMEKIVALAKARGFVYPGSEIYGGLANTWDYGNLGVELKNNVKKAWWTKFIQQNPYNVGVDCAILMNPQTWVASGHLGSFSDPLMDCKECRERFRADKIIEDYATEKNLTLEGSVDAWSHEEMSAYIEKNNIPCPTCGKHNFTDIRQFNLMFKTFQGVTEDAKNTVYLRPETAQGIFVNFKNVQRTSRKKIPFGIGQVGKSFRNEITPGNFTFRTREFEQMELEFFCEPDTDLEWFAYWKQFCIDWLQTLGIKEDEMRVRDHEKEELSFYSKATSDIEFLFPFGWGELWGIADRTDYDLTQHQNVSKEDLSYFDDEKGQRYIPYVIEPSLGADRVTLAFLCAAYDEEEIAEGDVRTVLHFHPAIAPVKIGVLPLSKKLSENAEKIYTDLSKYYNCEFDDRGNIGKRYRRQDEIGTPFCITYDFDSETDGAVTVRDRDTMEQERIKIEDLKAYFEKKFEF</sequence>
<proteinExistence type="inferred from homology"/>
<protein>
    <recommendedName>
        <fullName evidence="1">Glycine--tRNA ligase</fullName>
        <ecNumber evidence="1">6.1.1.14</ecNumber>
    </recommendedName>
    <alternativeName>
        <fullName evidence="1">Glycyl-tRNA synthetase</fullName>
        <shortName evidence="1">GlyRS</shortName>
    </alternativeName>
</protein>
<evidence type="ECO:0000255" key="1">
    <source>
        <dbReference type="HAMAP-Rule" id="MF_00253"/>
    </source>
</evidence>
<dbReference type="EC" id="6.1.1.14" evidence="1"/>
<dbReference type="EMBL" id="CP000885">
    <property type="protein sequence ID" value="ABX41035.1"/>
    <property type="molecule type" value="Genomic_DNA"/>
</dbReference>
<dbReference type="RefSeq" id="WP_012198679.1">
    <property type="nucleotide sequence ID" value="NC_010001.1"/>
</dbReference>
<dbReference type="SMR" id="A9KJ36"/>
<dbReference type="STRING" id="357809.Cphy_0648"/>
<dbReference type="KEGG" id="cpy:Cphy_0648"/>
<dbReference type="eggNOG" id="COG0423">
    <property type="taxonomic scope" value="Bacteria"/>
</dbReference>
<dbReference type="HOGENOM" id="CLU_015515_2_1_9"/>
<dbReference type="OrthoDB" id="9760853at2"/>
<dbReference type="Proteomes" id="UP000000370">
    <property type="component" value="Chromosome"/>
</dbReference>
<dbReference type="GO" id="GO:0005737">
    <property type="term" value="C:cytoplasm"/>
    <property type="evidence" value="ECO:0007669"/>
    <property type="project" value="UniProtKB-SubCell"/>
</dbReference>
<dbReference type="GO" id="GO:0005524">
    <property type="term" value="F:ATP binding"/>
    <property type="evidence" value="ECO:0007669"/>
    <property type="project" value="UniProtKB-UniRule"/>
</dbReference>
<dbReference type="GO" id="GO:0140096">
    <property type="term" value="F:catalytic activity, acting on a protein"/>
    <property type="evidence" value="ECO:0007669"/>
    <property type="project" value="UniProtKB-ARBA"/>
</dbReference>
<dbReference type="GO" id="GO:0004820">
    <property type="term" value="F:glycine-tRNA ligase activity"/>
    <property type="evidence" value="ECO:0000250"/>
    <property type="project" value="UniProtKB"/>
</dbReference>
<dbReference type="GO" id="GO:0046983">
    <property type="term" value="F:protein dimerization activity"/>
    <property type="evidence" value="ECO:0000250"/>
    <property type="project" value="UniProtKB"/>
</dbReference>
<dbReference type="GO" id="GO:0016740">
    <property type="term" value="F:transferase activity"/>
    <property type="evidence" value="ECO:0007669"/>
    <property type="project" value="UniProtKB-ARBA"/>
</dbReference>
<dbReference type="GO" id="GO:0006426">
    <property type="term" value="P:glycyl-tRNA aminoacylation"/>
    <property type="evidence" value="ECO:0007669"/>
    <property type="project" value="UniProtKB-UniRule"/>
</dbReference>
<dbReference type="CDD" id="cd00774">
    <property type="entry name" value="GlyRS-like_core"/>
    <property type="match status" value="1"/>
</dbReference>
<dbReference type="CDD" id="cd00858">
    <property type="entry name" value="GlyRS_anticodon"/>
    <property type="match status" value="1"/>
</dbReference>
<dbReference type="FunFam" id="3.40.50.800:FF:000002">
    <property type="entry name" value="Glycine--tRNA ligase"/>
    <property type="match status" value="1"/>
</dbReference>
<dbReference type="Gene3D" id="3.40.50.800">
    <property type="entry name" value="Anticodon-binding domain"/>
    <property type="match status" value="1"/>
</dbReference>
<dbReference type="Gene3D" id="3.30.930.10">
    <property type="entry name" value="Bira Bifunctional Protein, Domain 2"/>
    <property type="match status" value="1"/>
</dbReference>
<dbReference type="HAMAP" id="MF_00253_B">
    <property type="entry name" value="Gly_tRNA_synth_B"/>
    <property type="match status" value="1"/>
</dbReference>
<dbReference type="InterPro" id="IPR002314">
    <property type="entry name" value="aa-tRNA-synt_IIb"/>
</dbReference>
<dbReference type="InterPro" id="IPR006195">
    <property type="entry name" value="aa-tRNA-synth_II"/>
</dbReference>
<dbReference type="InterPro" id="IPR045864">
    <property type="entry name" value="aa-tRNA-synth_II/BPL/LPL"/>
</dbReference>
<dbReference type="InterPro" id="IPR004154">
    <property type="entry name" value="Anticodon-bd"/>
</dbReference>
<dbReference type="InterPro" id="IPR036621">
    <property type="entry name" value="Anticodon-bd_dom_sf"/>
</dbReference>
<dbReference type="InterPro" id="IPR027031">
    <property type="entry name" value="Gly-tRNA_synthase/POLG2"/>
</dbReference>
<dbReference type="InterPro" id="IPR022961">
    <property type="entry name" value="Gly_tRNA_ligase_bac"/>
</dbReference>
<dbReference type="InterPro" id="IPR033731">
    <property type="entry name" value="GlyRS-like_core"/>
</dbReference>
<dbReference type="InterPro" id="IPR002315">
    <property type="entry name" value="tRNA-synt_gly"/>
</dbReference>
<dbReference type="NCBIfam" id="TIGR00389">
    <property type="entry name" value="glyS_dimeric"/>
    <property type="match status" value="1"/>
</dbReference>
<dbReference type="NCBIfam" id="NF003211">
    <property type="entry name" value="PRK04173.1"/>
    <property type="match status" value="1"/>
</dbReference>
<dbReference type="PANTHER" id="PTHR10745:SF8">
    <property type="entry name" value="DNA POLYMERASE SUBUNIT GAMMA-2, MITOCHONDRIAL"/>
    <property type="match status" value="1"/>
</dbReference>
<dbReference type="PANTHER" id="PTHR10745">
    <property type="entry name" value="GLYCYL-TRNA SYNTHETASE/DNA POLYMERASE SUBUNIT GAMMA-2"/>
    <property type="match status" value="1"/>
</dbReference>
<dbReference type="Pfam" id="PF03129">
    <property type="entry name" value="HGTP_anticodon"/>
    <property type="match status" value="1"/>
</dbReference>
<dbReference type="Pfam" id="PF00587">
    <property type="entry name" value="tRNA-synt_2b"/>
    <property type="match status" value="1"/>
</dbReference>
<dbReference type="PRINTS" id="PR01043">
    <property type="entry name" value="TRNASYNTHGLY"/>
</dbReference>
<dbReference type="SUPFAM" id="SSF52954">
    <property type="entry name" value="Class II aaRS ABD-related"/>
    <property type="match status" value="1"/>
</dbReference>
<dbReference type="SUPFAM" id="SSF55681">
    <property type="entry name" value="Class II aaRS and biotin synthetases"/>
    <property type="match status" value="1"/>
</dbReference>
<dbReference type="PROSITE" id="PS50862">
    <property type="entry name" value="AA_TRNA_LIGASE_II"/>
    <property type="match status" value="1"/>
</dbReference>
<organism>
    <name type="scientific">Lachnoclostridium phytofermentans (strain ATCC 700394 / DSM 18823 / ISDg)</name>
    <name type="common">Clostridium phytofermentans</name>
    <dbReference type="NCBI Taxonomy" id="357809"/>
    <lineage>
        <taxon>Bacteria</taxon>
        <taxon>Bacillati</taxon>
        <taxon>Bacillota</taxon>
        <taxon>Clostridia</taxon>
        <taxon>Lachnospirales</taxon>
        <taxon>Lachnospiraceae</taxon>
    </lineage>
</organism>
<keyword id="KW-0030">Aminoacyl-tRNA synthetase</keyword>
<keyword id="KW-0067">ATP-binding</keyword>
<keyword id="KW-0963">Cytoplasm</keyword>
<keyword id="KW-0436">Ligase</keyword>
<keyword id="KW-0547">Nucleotide-binding</keyword>
<keyword id="KW-0648">Protein biosynthesis</keyword>
<keyword id="KW-1185">Reference proteome</keyword>
<feature type="chain" id="PRO_1000078515" description="Glycine--tRNA ligase">
    <location>
        <begin position="1"/>
        <end position="462"/>
    </location>
</feature>
<feature type="binding site" evidence="1">
    <location>
        <position position="98"/>
    </location>
    <ligand>
        <name>substrate</name>
    </ligand>
</feature>
<feature type="binding site" evidence="1">
    <location>
        <position position="174"/>
    </location>
    <ligand>
        <name>substrate</name>
    </ligand>
</feature>
<feature type="binding site" evidence="1">
    <location>
        <begin position="206"/>
        <end position="208"/>
    </location>
    <ligand>
        <name>ATP</name>
        <dbReference type="ChEBI" id="CHEBI:30616"/>
    </ligand>
</feature>
<feature type="binding site" evidence="1">
    <location>
        <begin position="216"/>
        <end position="221"/>
    </location>
    <ligand>
        <name>ATP</name>
        <dbReference type="ChEBI" id="CHEBI:30616"/>
    </ligand>
</feature>
<feature type="binding site" evidence="1">
    <location>
        <begin position="221"/>
        <end position="225"/>
    </location>
    <ligand>
        <name>substrate</name>
    </ligand>
</feature>
<feature type="binding site" evidence="1">
    <location>
        <begin position="290"/>
        <end position="291"/>
    </location>
    <ligand>
        <name>ATP</name>
        <dbReference type="ChEBI" id="CHEBI:30616"/>
    </ligand>
</feature>
<feature type="binding site" evidence="1">
    <location>
        <begin position="330"/>
        <end position="334"/>
    </location>
    <ligand>
        <name>substrate</name>
    </ligand>
</feature>
<feature type="binding site" evidence="1">
    <location>
        <begin position="334"/>
        <end position="337"/>
    </location>
    <ligand>
        <name>ATP</name>
        <dbReference type="ChEBI" id="CHEBI:30616"/>
    </ligand>
</feature>
<reference key="1">
    <citation type="submission" date="2007-11" db="EMBL/GenBank/DDBJ databases">
        <title>Complete genome sequence of Clostridium phytofermentans ISDg.</title>
        <authorList>
            <person name="Leschine S.B."/>
            <person name="Warnick T.A."/>
            <person name="Blanchard J.L."/>
            <person name="Schnell D.J."/>
            <person name="Petit E.L."/>
            <person name="LaTouf W.G."/>
            <person name="Copeland A."/>
            <person name="Lucas S."/>
            <person name="Lapidus A."/>
            <person name="Barry K."/>
            <person name="Glavina del Rio T."/>
            <person name="Dalin E."/>
            <person name="Tice H."/>
            <person name="Pitluck S."/>
            <person name="Kiss H."/>
            <person name="Brettin T."/>
            <person name="Bruce D."/>
            <person name="Detter J.C."/>
            <person name="Han C."/>
            <person name="Kuske C."/>
            <person name="Schmutz J."/>
            <person name="Larimer F."/>
            <person name="Land M."/>
            <person name="Hauser L."/>
            <person name="Kyrpides N."/>
            <person name="Kim E.A."/>
            <person name="Richardson P."/>
        </authorList>
    </citation>
    <scope>NUCLEOTIDE SEQUENCE [LARGE SCALE GENOMIC DNA]</scope>
    <source>
        <strain>ATCC 700394 / DSM 18823 / ISDg</strain>
    </source>
</reference>
<comment type="function">
    <text evidence="1">Catalyzes the attachment of glycine to tRNA(Gly).</text>
</comment>
<comment type="catalytic activity">
    <reaction evidence="1">
        <text>tRNA(Gly) + glycine + ATP = glycyl-tRNA(Gly) + AMP + diphosphate</text>
        <dbReference type="Rhea" id="RHEA:16013"/>
        <dbReference type="Rhea" id="RHEA-COMP:9664"/>
        <dbReference type="Rhea" id="RHEA-COMP:9683"/>
        <dbReference type="ChEBI" id="CHEBI:30616"/>
        <dbReference type="ChEBI" id="CHEBI:33019"/>
        <dbReference type="ChEBI" id="CHEBI:57305"/>
        <dbReference type="ChEBI" id="CHEBI:78442"/>
        <dbReference type="ChEBI" id="CHEBI:78522"/>
        <dbReference type="ChEBI" id="CHEBI:456215"/>
        <dbReference type="EC" id="6.1.1.14"/>
    </reaction>
</comment>
<comment type="subunit">
    <text evidence="1">Homodimer.</text>
</comment>
<comment type="subcellular location">
    <subcellularLocation>
        <location evidence="1">Cytoplasm</location>
    </subcellularLocation>
</comment>
<comment type="similarity">
    <text evidence="1">Belongs to the class-II aminoacyl-tRNA synthetase family.</text>
</comment>
<gene>
    <name evidence="1" type="primary">glyQS</name>
    <name type="ordered locus">Cphy_0648</name>
</gene>
<name>SYG_LACP7</name>